<feature type="chain" id="PRO_0000110156" description="Fluoride-specific ion channel FluC 2">
    <location>
        <begin position="1"/>
        <end position="123"/>
    </location>
</feature>
<feature type="transmembrane region" description="Helical" evidence="1">
    <location>
        <begin position="3"/>
        <end position="23"/>
    </location>
</feature>
<feature type="transmembrane region" description="Helical" evidence="1">
    <location>
        <begin position="38"/>
        <end position="58"/>
    </location>
</feature>
<feature type="transmembrane region" description="Helical" evidence="1">
    <location>
        <begin position="62"/>
        <end position="82"/>
    </location>
</feature>
<feature type="transmembrane region" description="Helical" evidence="1">
    <location>
        <begin position="94"/>
        <end position="114"/>
    </location>
</feature>
<feature type="binding site" evidence="1">
    <location>
        <position position="72"/>
    </location>
    <ligand>
        <name>Na(+)</name>
        <dbReference type="ChEBI" id="CHEBI:29101"/>
        <note>structural</note>
    </ligand>
</feature>
<feature type="binding site" evidence="1">
    <location>
        <position position="75"/>
    </location>
    <ligand>
        <name>Na(+)</name>
        <dbReference type="ChEBI" id="CHEBI:29101"/>
        <note>structural</note>
    </ligand>
</feature>
<name>FLUC2_PROMP</name>
<sequence>MELDGFIYILVGSTFGLIVRMFIKYISGKKKIFYSNNILIVNVLASLFLGIFEGLNITNKNLILFIFVGFLGCFSTFSSFIYQLFNLIREKKYLILLIYYAEVILLSFLFFCLGYFITLTFIN</sequence>
<accession>Q7UZM6</accession>
<comment type="function">
    <text evidence="1">Fluoride-specific ion channel. Important for reducing fluoride concentration in the cell, thus reducing its toxicity.</text>
</comment>
<comment type="catalytic activity">
    <reaction evidence="1">
        <text>fluoride(in) = fluoride(out)</text>
        <dbReference type="Rhea" id="RHEA:76159"/>
        <dbReference type="ChEBI" id="CHEBI:17051"/>
    </reaction>
    <physiologicalReaction direction="left-to-right" evidence="1">
        <dbReference type="Rhea" id="RHEA:76160"/>
    </physiologicalReaction>
</comment>
<comment type="activity regulation">
    <text evidence="1">Na(+) is not transported, but it plays an essential structural role and its presence is essential for fluoride channel function.</text>
</comment>
<comment type="subcellular location">
    <subcellularLocation>
        <location evidence="1">Cell inner membrane</location>
        <topology evidence="1">Multi-pass membrane protein</topology>
    </subcellularLocation>
</comment>
<comment type="similarity">
    <text evidence="1">Belongs to the fluoride channel Fluc/FEX (TC 1.A.43) family.</text>
</comment>
<evidence type="ECO:0000255" key="1">
    <source>
        <dbReference type="HAMAP-Rule" id="MF_00454"/>
    </source>
</evidence>
<dbReference type="EMBL" id="BX548174">
    <property type="protein sequence ID" value="CAE20091.1"/>
    <property type="molecule type" value="Genomic_DNA"/>
</dbReference>
<dbReference type="RefSeq" id="WP_011133259.1">
    <property type="nucleotide sequence ID" value="NC_005072.1"/>
</dbReference>
<dbReference type="SMR" id="Q7UZM6"/>
<dbReference type="STRING" id="59919.PMM1632"/>
<dbReference type="KEGG" id="pmm:PMM1632"/>
<dbReference type="HOGENOM" id="CLU_114342_2_3_3"/>
<dbReference type="OrthoDB" id="9815830at2"/>
<dbReference type="Proteomes" id="UP000001026">
    <property type="component" value="Chromosome"/>
</dbReference>
<dbReference type="GO" id="GO:0005886">
    <property type="term" value="C:plasma membrane"/>
    <property type="evidence" value="ECO:0007669"/>
    <property type="project" value="UniProtKB-SubCell"/>
</dbReference>
<dbReference type="GO" id="GO:0062054">
    <property type="term" value="F:fluoride channel activity"/>
    <property type="evidence" value="ECO:0007669"/>
    <property type="project" value="UniProtKB-UniRule"/>
</dbReference>
<dbReference type="GO" id="GO:0046872">
    <property type="term" value="F:metal ion binding"/>
    <property type="evidence" value="ECO:0007669"/>
    <property type="project" value="UniProtKB-KW"/>
</dbReference>
<dbReference type="GO" id="GO:0140114">
    <property type="term" value="P:cellular detoxification of fluoride"/>
    <property type="evidence" value="ECO:0007669"/>
    <property type="project" value="UniProtKB-UniRule"/>
</dbReference>
<dbReference type="HAMAP" id="MF_00454">
    <property type="entry name" value="FluC"/>
    <property type="match status" value="1"/>
</dbReference>
<dbReference type="InterPro" id="IPR003691">
    <property type="entry name" value="FluC"/>
</dbReference>
<dbReference type="PANTHER" id="PTHR28259">
    <property type="entry name" value="FLUORIDE EXPORT PROTEIN 1-RELATED"/>
    <property type="match status" value="1"/>
</dbReference>
<dbReference type="PANTHER" id="PTHR28259:SF1">
    <property type="entry name" value="FLUORIDE EXPORT PROTEIN 1-RELATED"/>
    <property type="match status" value="1"/>
</dbReference>
<dbReference type="Pfam" id="PF02537">
    <property type="entry name" value="CRCB"/>
    <property type="match status" value="1"/>
</dbReference>
<organism>
    <name type="scientific">Prochlorococcus marinus subsp. pastoris (strain CCMP1986 / NIES-2087 / MED4)</name>
    <dbReference type="NCBI Taxonomy" id="59919"/>
    <lineage>
        <taxon>Bacteria</taxon>
        <taxon>Bacillati</taxon>
        <taxon>Cyanobacteriota</taxon>
        <taxon>Cyanophyceae</taxon>
        <taxon>Synechococcales</taxon>
        <taxon>Prochlorococcaceae</taxon>
        <taxon>Prochlorococcus</taxon>
    </lineage>
</organism>
<keyword id="KW-0997">Cell inner membrane</keyword>
<keyword id="KW-1003">Cell membrane</keyword>
<keyword id="KW-0407">Ion channel</keyword>
<keyword id="KW-0406">Ion transport</keyword>
<keyword id="KW-0472">Membrane</keyword>
<keyword id="KW-0479">Metal-binding</keyword>
<keyword id="KW-0915">Sodium</keyword>
<keyword id="KW-0812">Transmembrane</keyword>
<keyword id="KW-1133">Transmembrane helix</keyword>
<keyword id="KW-0813">Transport</keyword>
<reference key="1">
    <citation type="journal article" date="2003" name="Nature">
        <title>Genome divergence in two Prochlorococcus ecotypes reflects oceanic niche differentiation.</title>
        <authorList>
            <person name="Rocap G."/>
            <person name="Larimer F.W."/>
            <person name="Lamerdin J.E."/>
            <person name="Malfatti S."/>
            <person name="Chain P."/>
            <person name="Ahlgren N.A."/>
            <person name="Arellano A."/>
            <person name="Coleman M."/>
            <person name="Hauser L."/>
            <person name="Hess W.R."/>
            <person name="Johnson Z.I."/>
            <person name="Land M.L."/>
            <person name="Lindell D."/>
            <person name="Post A.F."/>
            <person name="Regala W."/>
            <person name="Shah M."/>
            <person name="Shaw S.L."/>
            <person name="Steglich C."/>
            <person name="Sullivan M.B."/>
            <person name="Ting C.S."/>
            <person name="Tolonen A."/>
            <person name="Webb E.A."/>
            <person name="Zinser E.R."/>
            <person name="Chisholm S.W."/>
        </authorList>
    </citation>
    <scope>NUCLEOTIDE SEQUENCE [LARGE SCALE GENOMIC DNA]</scope>
    <source>
        <strain>CCMP1986 / NIES-2087 / MED4</strain>
    </source>
</reference>
<gene>
    <name evidence="1" type="primary">fluC2</name>
    <name evidence="1" type="synonym">crcB2</name>
    <name type="ordered locus">PMM1632</name>
</gene>
<proteinExistence type="inferred from homology"/>
<protein>
    <recommendedName>
        <fullName evidence="1">Fluoride-specific ion channel FluC 2</fullName>
    </recommendedName>
</protein>